<keyword id="KW-0067">ATP-binding</keyword>
<keyword id="KW-0436">Ligase</keyword>
<keyword id="KW-0547">Nucleotide-binding</keyword>
<keyword id="KW-0658">Purine biosynthesis</keyword>
<sequence>MQKLELLYEGKAKRIYRTESADMVWVEYKDSATAFNGEKKETITGKGRLNNEITTLLFRKLQEVGIKTHFVEKLSETEQLVKKVSIIPLEVVTRNVIAGSLSKRLGMEEGTVLAEPIVEFYFKDDDLGDPLVTEDHIRVLNVASPEQVSVLRDMALQINQVLIDHFASCRVRLVDFKLEFGVTDEGAIILADEISPDTCRLWDETSNEKFDKDVFRRDLGNLTDAYEEILKRLGGISHV</sequence>
<evidence type="ECO:0000255" key="1">
    <source>
        <dbReference type="HAMAP-Rule" id="MF_00137"/>
    </source>
</evidence>
<reference key="1">
    <citation type="submission" date="2008-10" db="EMBL/GenBank/DDBJ databases">
        <title>Genome sequence of Bacillus anthracis str. CDC 684.</title>
        <authorList>
            <person name="Dodson R.J."/>
            <person name="Munk A.C."/>
            <person name="Brettin T."/>
            <person name="Bruce D."/>
            <person name="Detter C."/>
            <person name="Tapia R."/>
            <person name="Han C."/>
            <person name="Sutton G."/>
            <person name="Sims D."/>
        </authorList>
    </citation>
    <scope>NUCLEOTIDE SEQUENCE [LARGE SCALE GENOMIC DNA]</scope>
    <source>
        <strain>CDC 684 / NRRL 3495</strain>
    </source>
</reference>
<accession>C3L529</accession>
<dbReference type="EC" id="6.3.2.6" evidence="1"/>
<dbReference type="EMBL" id="CP001215">
    <property type="protein sequence ID" value="ACP14860.1"/>
    <property type="molecule type" value="Genomic_DNA"/>
</dbReference>
<dbReference type="RefSeq" id="WP_001170540.1">
    <property type="nucleotide sequence ID" value="NC_012581.1"/>
</dbReference>
<dbReference type="SMR" id="C3L529"/>
<dbReference type="GeneID" id="45020350"/>
<dbReference type="KEGG" id="bah:BAMEG_0349"/>
<dbReference type="HOGENOM" id="CLU_061495_2_0_9"/>
<dbReference type="UniPathway" id="UPA00074">
    <property type="reaction ID" value="UER00131"/>
</dbReference>
<dbReference type="GO" id="GO:0005524">
    <property type="term" value="F:ATP binding"/>
    <property type="evidence" value="ECO:0007669"/>
    <property type="project" value="UniProtKB-KW"/>
</dbReference>
<dbReference type="GO" id="GO:0004639">
    <property type="term" value="F:phosphoribosylaminoimidazolesuccinocarboxamide synthase activity"/>
    <property type="evidence" value="ECO:0007669"/>
    <property type="project" value="UniProtKB-UniRule"/>
</dbReference>
<dbReference type="GO" id="GO:0006189">
    <property type="term" value="P:'de novo' IMP biosynthetic process"/>
    <property type="evidence" value="ECO:0007669"/>
    <property type="project" value="UniProtKB-UniRule"/>
</dbReference>
<dbReference type="GO" id="GO:0009236">
    <property type="term" value="P:cobalamin biosynthetic process"/>
    <property type="evidence" value="ECO:0007669"/>
    <property type="project" value="InterPro"/>
</dbReference>
<dbReference type="CDD" id="cd01415">
    <property type="entry name" value="SAICAR_synt_PurC"/>
    <property type="match status" value="1"/>
</dbReference>
<dbReference type="FunFam" id="3.30.200.20:FF:000189">
    <property type="entry name" value="Phosphoribosylaminoimidazole-succinocarboxamide synthase"/>
    <property type="match status" value="1"/>
</dbReference>
<dbReference type="FunFam" id="3.30.470.20:FF:000006">
    <property type="entry name" value="Phosphoribosylaminoimidazole-succinocarboxamide synthase"/>
    <property type="match status" value="1"/>
</dbReference>
<dbReference type="Gene3D" id="3.30.470.20">
    <property type="entry name" value="ATP-grasp fold, B domain"/>
    <property type="match status" value="1"/>
</dbReference>
<dbReference type="Gene3D" id="3.30.200.20">
    <property type="entry name" value="Phosphorylase Kinase, domain 1"/>
    <property type="match status" value="1"/>
</dbReference>
<dbReference type="HAMAP" id="MF_00137">
    <property type="entry name" value="SAICAR_synth"/>
    <property type="match status" value="1"/>
</dbReference>
<dbReference type="InterPro" id="IPR028923">
    <property type="entry name" value="SAICAR_synt/ADE2_N"/>
</dbReference>
<dbReference type="InterPro" id="IPR033934">
    <property type="entry name" value="SAICAR_synt_PurC"/>
</dbReference>
<dbReference type="InterPro" id="IPR001636">
    <property type="entry name" value="SAICAR_synth"/>
</dbReference>
<dbReference type="InterPro" id="IPR050089">
    <property type="entry name" value="SAICAR_synthetase"/>
</dbReference>
<dbReference type="InterPro" id="IPR018236">
    <property type="entry name" value="SAICAR_synthetase_CS"/>
</dbReference>
<dbReference type="NCBIfam" id="TIGR00081">
    <property type="entry name" value="purC"/>
    <property type="match status" value="1"/>
</dbReference>
<dbReference type="PANTHER" id="PTHR43599">
    <property type="entry name" value="MULTIFUNCTIONAL PROTEIN ADE2"/>
    <property type="match status" value="1"/>
</dbReference>
<dbReference type="PANTHER" id="PTHR43599:SF3">
    <property type="entry name" value="SI:DKEY-6E2.2"/>
    <property type="match status" value="1"/>
</dbReference>
<dbReference type="Pfam" id="PF01259">
    <property type="entry name" value="SAICAR_synt"/>
    <property type="match status" value="1"/>
</dbReference>
<dbReference type="SUPFAM" id="SSF56104">
    <property type="entry name" value="SAICAR synthase-like"/>
    <property type="match status" value="1"/>
</dbReference>
<dbReference type="PROSITE" id="PS01057">
    <property type="entry name" value="SAICAR_SYNTHETASE_1"/>
    <property type="match status" value="1"/>
</dbReference>
<dbReference type="PROSITE" id="PS01058">
    <property type="entry name" value="SAICAR_SYNTHETASE_2"/>
    <property type="match status" value="1"/>
</dbReference>
<comment type="catalytic activity">
    <reaction evidence="1">
        <text>5-amino-1-(5-phospho-D-ribosyl)imidazole-4-carboxylate + L-aspartate + ATP = (2S)-2-[5-amino-1-(5-phospho-beta-D-ribosyl)imidazole-4-carboxamido]succinate + ADP + phosphate + 2 H(+)</text>
        <dbReference type="Rhea" id="RHEA:22628"/>
        <dbReference type="ChEBI" id="CHEBI:15378"/>
        <dbReference type="ChEBI" id="CHEBI:29991"/>
        <dbReference type="ChEBI" id="CHEBI:30616"/>
        <dbReference type="ChEBI" id="CHEBI:43474"/>
        <dbReference type="ChEBI" id="CHEBI:58443"/>
        <dbReference type="ChEBI" id="CHEBI:77657"/>
        <dbReference type="ChEBI" id="CHEBI:456216"/>
        <dbReference type="EC" id="6.3.2.6"/>
    </reaction>
</comment>
<comment type="pathway">
    <text evidence="1">Purine metabolism; IMP biosynthesis via de novo pathway; 5-amino-1-(5-phospho-D-ribosyl)imidazole-4-carboxamide from 5-amino-1-(5-phospho-D-ribosyl)imidazole-4-carboxylate: step 1/2.</text>
</comment>
<comment type="similarity">
    <text evidence="1">Belongs to the SAICAR synthetase family.</text>
</comment>
<organism>
    <name type="scientific">Bacillus anthracis (strain CDC 684 / NRRL 3495)</name>
    <dbReference type="NCBI Taxonomy" id="568206"/>
    <lineage>
        <taxon>Bacteria</taxon>
        <taxon>Bacillati</taxon>
        <taxon>Bacillota</taxon>
        <taxon>Bacilli</taxon>
        <taxon>Bacillales</taxon>
        <taxon>Bacillaceae</taxon>
        <taxon>Bacillus</taxon>
        <taxon>Bacillus cereus group</taxon>
    </lineage>
</organism>
<protein>
    <recommendedName>
        <fullName evidence="1">Phosphoribosylaminoimidazole-succinocarboxamide synthase</fullName>
        <ecNumber evidence="1">6.3.2.6</ecNumber>
    </recommendedName>
    <alternativeName>
        <fullName evidence="1">SAICAR synthetase</fullName>
    </alternativeName>
</protein>
<gene>
    <name evidence="1" type="primary">purC</name>
    <name type="ordered locus">BAMEG_0349</name>
</gene>
<name>PUR7_BACAC</name>
<proteinExistence type="inferred from homology"/>
<feature type="chain" id="PRO_1000122900" description="Phosphoribosylaminoimidazole-succinocarboxamide synthase">
    <location>
        <begin position="1"/>
        <end position="239"/>
    </location>
</feature>